<reference key="1">
    <citation type="journal article" date="2004" name="Environ. Microbiol.">
        <title>The genome of Desulfotalea psychrophila, a sulfate-reducing bacterium from permanently cold Arctic sediments.</title>
        <authorList>
            <person name="Rabus R."/>
            <person name="Ruepp A."/>
            <person name="Frickey T."/>
            <person name="Rattei T."/>
            <person name="Fartmann B."/>
            <person name="Stark M."/>
            <person name="Bauer M."/>
            <person name="Zibat A."/>
            <person name="Lombardot T."/>
            <person name="Becker I."/>
            <person name="Amann J."/>
            <person name="Gellner K."/>
            <person name="Teeling H."/>
            <person name="Leuschner W.D."/>
            <person name="Gloeckner F.-O."/>
            <person name="Lupas A.N."/>
            <person name="Amann R."/>
            <person name="Klenk H.-P."/>
        </authorList>
    </citation>
    <scope>NUCLEOTIDE SEQUENCE [LARGE SCALE GENOMIC DNA]</scope>
    <source>
        <strain>DSM 12343 / LSv54</strain>
    </source>
</reference>
<protein>
    <recommendedName>
        <fullName evidence="1">ATP-dependent Clp protease ATP-binding subunit ClpX</fullName>
    </recommendedName>
</protein>
<dbReference type="EMBL" id="CR522870">
    <property type="protein sequence ID" value="CAG37266.1"/>
    <property type="molecule type" value="Genomic_DNA"/>
</dbReference>
<dbReference type="RefSeq" id="WP_011189778.1">
    <property type="nucleotide sequence ID" value="NC_006138.1"/>
</dbReference>
<dbReference type="SMR" id="Q6AK60"/>
<dbReference type="STRING" id="177439.DP2537"/>
<dbReference type="KEGG" id="dps:DP2537"/>
<dbReference type="eggNOG" id="COG1219">
    <property type="taxonomic scope" value="Bacteria"/>
</dbReference>
<dbReference type="HOGENOM" id="CLU_014218_8_2_7"/>
<dbReference type="OrthoDB" id="9804062at2"/>
<dbReference type="Proteomes" id="UP000000602">
    <property type="component" value="Chromosome"/>
</dbReference>
<dbReference type="GO" id="GO:0009376">
    <property type="term" value="C:HslUV protease complex"/>
    <property type="evidence" value="ECO:0007669"/>
    <property type="project" value="TreeGrafter"/>
</dbReference>
<dbReference type="GO" id="GO:0005524">
    <property type="term" value="F:ATP binding"/>
    <property type="evidence" value="ECO:0007669"/>
    <property type="project" value="UniProtKB-UniRule"/>
</dbReference>
<dbReference type="GO" id="GO:0016887">
    <property type="term" value="F:ATP hydrolysis activity"/>
    <property type="evidence" value="ECO:0007669"/>
    <property type="project" value="InterPro"/>
</dbReference>
<dbReference type="GO" id="GO:0140662">
    <property type="term" value="F:ATP-dependent protein folding chaperone"/>
    <property type="evidence" value="ECO:0007669"/>
    <property type="project" value="InterPro"/>
</dbReference>
<dbReference type="GO" id="GO:0046983">
    <property type="term" value="F:protein dimerization activity"/>
    <property type="evidence" value="ECO:0007669"/>
    <property type="project" value="InterPro"/>
</dbReference>
<dbReference type="GO" id="GO:0051082">
    <property type="term" value="F:unfolded protein binding"/>
    <property type="evidence" value="ECO:0007669"/>
    <property type="project" value="UniProtKB-UniRule"/>
</dbReference>
<dbReference type="GO" id="GO:0008270">
    <property type="term" value="F:zinc ion binding"/>
    <property type="evidence" value="ECO:0007669"/>
    <property type="project" value="InterPro"/>
</dbReference>
<dbReference type="GO" id="GO:0051301">
    <property type="term" value="P:cell division"/>
    <property type="evidence" value="ECO:0007669"/>
    <property type="project" value="TreeGrafter"/>
</dbReference>
<dbReference type="GO" id="GO:0051603">
    <property type="term" value="P:proteolysis involved in protein catabolic process"/>
    <property type="evidence" value="ECO:0007669"/>
    <property type="project" value="TreeGrafter"/>
</dbReference>
<dbReference type="CDD" id="cd19497">
    <property type="entry name" value="RecA-like_ClpX"/>
    <property type="match status" value="1"/>
</dbReference>
<dbReference type="FunFam" id="1.10.8.60:FF:000002">
    <property type="entry name" value="ATP-dependent Clp protease ATP-binding subunit ClpX"/>
    <property type="match status" value="1"/>
</dbReference>
<dbReference type="FunFam" id="3.40.50.300:FF:000005">
    <property type="entry name" value="ATP-dependent Clp protease ATP-binding subunit ClpX"/>
    <property type="match status" value="1"/>
</dbReference>
<dbReference type="Gene3D" id="1.10.8.60">
    <property type="match status" value="1"/>
</dbReference>
<dbReference type="Gene3D" id="6.20.220.10">
    <property type="entry name" value="ClpX chaperone, C4-type zinc finger domain"/>
    <property type="match status" value="1"/>
</dbReference>
<dbReference type="Gene3D" id="3.40.50.300">
    <property type="entry name" value="P-loop containing nucleotide triphosphate hydrolases"/>
    <property type="match status" value="1"/>
</dbReference>
<dbReference type="HAMAP" id="MF_00175">
    <property type="entry name" value="ClpX"/>
    <property type="match status" value="1"/>
</dbReference>
<dbReference type="InterPro" id="IPR003593">
    <property type="entry name" value="AAA+_ATPase"/>
</dbReference>
<dbReference type="InterPro" id="IPR050052">
    <property type="entry name" value="ATP-dep_Clp_protease_ClpX"/>
</dbReference>
<dbReference type="InterPro" id="IPR003959">
    <property type="entry name" value="ATPase_AAA_core"/>
</dbReference>
<dbReference type="InterPro" id="IPR019489">
    <property type="entry name" value="Clp_ATPase_C"/>
</dbReference>
<dbReference type="InterPro" id="IPR004487">
    <property type="entry name" value="Clp_protease_ATP-bd_su_ClpX"/>
</dbReference>
<dbReference type="InterPro" id="IPR046425">
    <property type="entry name" value="ClpX_bact"/>
</dbReference>
<dbReference type="InterPro" id="IPR027417">
    <property type="entry name" value="P-loop_NTPase"/>
</dbReference>
<dbReference type="InterPro" id="IPR010603">
    <property type="entry name" value="Znf_CppX_C4"/>
</dbReference>
<dbReference type="InterPro" id="IPR038366">
    <property type="entry name" value="Znf_CppX_C4_sf"/>
</dbReference>
<dbReference type="NCBIfam" id="TIGR00382">
    <property type="entry name" value="clpX"/>
    <property type="match status" value="1"/>
</dbReference>
<dbReference type="NCBIfam" id="NF003745">
    <property type="entry name" value="PRK05342.1"/>
    <property type="match status" value="1"/>
</dbReference>
<dbReference type="PANTHER" id="PTHR48102:SF7">
    <property type="entry name" value="ATP-DEPENDENT CLP PROTEASE ATP-BINDING SUBUNIT CLPX-LIKE, MITOCHONDRIAL"/>
    <property type="match status" value="1"/>
</dbReference>
<dbReference type="PANTHER" id="PTHR48102">
    <property type="entry name" value="ATP-DEPENDENT CLP PROTEASE ATP-BINDING SUBUNIT CLPX-LIKE, MITOCHONDRIAL-RELATED"/>
    <property type="match status" value="1"/>
</dbReference>
<dbReference type="Pfam" id="PF07724">
    <property type="entry name" value="AAA_2"/>
    <property type="match status" value="1"/>
</dbReference>
<dbReference type="Pfam" id="PF10431">
    <property type="entry name" value="ClpB_D2-small"/>
    <property type="match status" value="1"/>
</dbReference>
<dbReference type="Pfam" id="PF06689">
    <property type="entry name" value="zf-C4_ClpX"/>
    <property type="match status" value="1"/>
</dbReference>
<dbReference type="SMART" id="SM00382">
    <property type="entry name" value="AAA"/>
    <property type="match status" value="1"/>
</dbReference>
<dbReference type="SMART" id="SM01086">
    <property type="entry name" value="ClpB_D2-small"/>
    <property type="match status" value="1"/>
</dbReference>
<dbReference type="SMART" id="SM00994">
    <property type="entry name" value="zf-C4_ClpX"/>
    <property type="match status" value="1"/>
</dbReference>
<dbReference type="SUPFAM" id="SSF57716">
    <property type="entry name" value="Glucocorticoid receptor-like (DNA-binding domain)"/>
    <property type="match status" value="1"/>
</dbReference>
<dbReference type="SUPFAM" id="SSF52540">
    <property type="entry name" value="P-loop containing nucleoside triphosphate hydrolases"/>
    <property type="match status" value="1"/>
</dbReference>
<dbReference type="PROSITE" id="PS51902">
    <property type="entry name" value="CLPX_ZB"/>
    <property type="match status" value="1"/>
</dbReference>
<comment type="function">
    <text evidence="1">ATP-dependent specificity component of the Clp protease. It directs the protease to specific substrates. Can perform chaperone functions in the absence of ClpP.</text>
</comment>
<comment type="subunit">
    <text evidence="1">Component of the ClpX-ClpP complex. Forms a hexameric ring that, in the presence of ATP, binds to fourteen ClpP subunits assembled into a disk-like structure with a central cavity, resembling the structure of eukaryotic proteasomes.</text>
</comment>
<comment type="similarity">
    <text evidence="1">Belongs to the ClpX chaperone family.</text>
</comment>
<keyword id="KW-0067">ATP-binding</keyword>
<keyword id="KW-0143">Chaperone</keyword>
<keyword id="KW-0479">Metal-binding</keyword>
<keyword id="KW-0547">Nucleotide-binding</keyword>
<keyword id="KW-1185">Reference proteome</keyword>
<keyword id="KW-0862">Zinc</keyword>
<name>CLPX_DESPS</name>
<sequence length="419" mass="45666">MDEIGKNDMENSCSFCGRSQEEVDKLIAGPDVFICNECIELCNEIVQEDIVGSKDDGQEVLPGLVPKDVKAHLDDYVIGQAYAKKVLAVAVHNHYKRIDAPVELLDDSVELQKSNIILLGPTGSGKTLVAQTLAKILNVPFSVADATTLTEAGYVGDDVENILVSLLQAADYDVEKAQRGIIYIDEIDKIARKSDSASLTRDVSGEGVQQALLKIIEGTVASVPPKGGRKHPQQELVKIDTTNILFICGGAFVGLGRVVKRRAGKKSIGFSADLSADKRSESELLEAVRPEDLLKFGLIPELVGRLPVIASLRELSEDDLVRILREPKNALTRQFEKLFQFEGVKLTFTEGSLAAVAKKAIARKSGARGLRSVLEEAMLDIMYDIPSLSNVQECIVNEQVITDGEYPVLLYGEEEKSLT</sequence>
<proteinExistence type="inferred from homology"/>
<evidence type="ECO:0000255" key="1">
    <source>
        <dbReference type="HAMAP-Rule" id="MF_00175"/>
    </source>
</evidence>
<evidence type="ECO:0000255" key="2">
    <source>
        <dbReference type="PROSITE-ProRule" id="PRU01250"/>
    </source>
</evidence>
<gene>
    <name evidence="1" type="primary">clpX</name>
    <name type="ordered locus">DP2537</name>
</gene>
<accession>Q6AK60</accession>
<feature type="chain" id="PRO_0000160350" description="ATP-dependent Clp protease ATP-binding subunit ClpX">
    <location>
        <begin position="1"/>
        <end position="419"/>
    </location>
</feature>
<feature type="domain" description="ClpX-type ZB" evidence="2">
    <location>
        <begin position="1"/>
        <end position="54"/>
    </location>
</feature>
<feature type="binding site" evidence="2">
    <location>
        <position position="13"/>
    </location>
    <ligand>
        <name>Zn(2+)</name>
        <dbReference type="ChEBI" id="CHEBI:29105"/>
    </ligand>
</feature>
<feature type="binding site" evidence="2">
    <location>
        <position position="16"/>
    </location>
    <ligand>
        <name>Zn(2+)</name>
        <dbReference type="ChEBI" id="CHEBI:29105"/>
    </ligand>
</feature>
<feature type="binding site" evidence="2">
    <location>
        <position position="35"/>
    </location>
    <ligand>
        <name>Zn(2+)</name>
        <dbReference type="ChEBI" id="CHEBI:29105"/>
    </ligand>
</feature>
<feature type="binding site" evidence="2">
    <location>
        <position position="38"/>
    </location>
    <ligand>
        <name>Zn(2+)</name>
        <dbReference type="ChEBI" id="CHEBI:29105"/>
    </ligand>
</feature>
<feature type="binding site" evidence="1">
    <location>
        <begin position="121"/>
        <end position="128"/>
    </location>
    <ligand>
        <name>ATP</name>
        <dbReference type="ChEBI" id="CHEBI:30616"/>
    </ligand>
</feature>
<organism>
    <name type="scientific">Desulfotalea psychrophila (strain LSv54 / DSM 12343)</name>
    <dbReference type="NCBI Taxonomy" id="177439"/>
    <lineage>
        <taxon>Bacteria</taxon>
        <taxon>Pseudomonadati</taxon>
        <taxon>Thermodesulfobacteriota</taxon>
        <taxon>Desulfobulbia</taxon>
        <taxon>Desulfobulbales</taxon>
        <taxon>Desulfocapsaceae</taxon>
        <taxon>Desulfotalea</taxon>
    </lineage>
</organism>